<protein>
    <recommendedName>
        <fullName>C-type natriuretic peptide 1</fullName>
    </recommendedName>
</protein>
<sequence length="126" mass="14068">MLCPALLCAALLLLTPVEITDARALQQPSDAAQFMEQFLESYNDLLTLDDLENMLNSHPEDQSNLSSSKADEYPKWAEADTPWLRLLRGALANQKRAEPDRSRRGWNRGCFGLKLDRIGSMSGLGC</sequence>
<proteinExistence type="evidence at transcript level"/>
<organism>
    <name type="scientific">Takifugu rubripes</name>
    <name type="common">Japanese pufferfish</name>
    <name type="synonym">Fugu rubripes</name>
    <dbReference type="NCBI Taxonomy" id="31033"/>
    <lineage>
        <taxon>Eukaryota</taxon>
        <taxon>Metazoa</taxon>
        <taxon>Chordata</taxon>
        <taxon>Craniata</taxon>
        <taxon>Vertebrata</taxon>
        <taxon>Euteleostomi</taxon>
        <taxon>Actinopterygii</taxon>
        <taxon>Neopterygii</taxon>
        <taxon>Teleostei</taxon>
        <taxon>Neoteleostei</taxon>
        <taxon>Acanthomorphata</taxon>
        <taxon>Eupercaria</taxon>
        <taxon>Tetraodontiformes</taxon>
        <taxon>Tetradontoidea</taxon>
        <taxon>Tetraodontidae</taxon>
        <taxon>Takifugu</taxon>
    </lineage>
</organism>
<reference evidence="6" key="1">
    <citation type="journal article" date="2003" name="Proc. Natl. Acad. Sci. U.S.A.">
        <title>Four functionally distinct C-type natriuretic peptides found in fish reveal evolutionary history of the natriuretic peptide system.</title>
        <authorList>
            <person name="Inoue K."/>
            <person name="Naruse K."/>
            <person name="Yamagami S."/>
            <person name="Mitani H."/>
            <person name="Suzuki N."/>
            <person name="Takei Y."/>
        </authorList>
    </citation>
    <scope>NUCLEOTIDE SEQUENCE [MRNA]</scope>
    <source>
        <tissue evidence="6">Brain</tissue>
    </source>
</reference>
<accession>Q805D6</accession>
<dbReference type="EMBL" id="AB089935">
    <property type="protein sequence ID" value="BAC57071.1"/>
    <property type="molecule type" value="mRNA"/>
</dbReference>
<dbReference type="RefSeq" id="NP_001027739.1">
    <property type="nucleotide sequence ID" value="NM_001032567.2"/>
</dbReference>
<dbReference type="FunCoup" id="Q805D6">
    <property type="interactions" value="9"/>
</dbReference>
<dbReference type="STRING" id="31033.ENSTRUP00000008506"/>
<dbReference type="GeneID" id="445904"/>
<dbReference type="KEGG" id="tru:445904"/>
<dbReference type="CTD" id="445904"/>
<dbReference type="eggNOG" id="ENOG502S2D6">
    <property type="taxonomic scope" value="Eukaryota"/>
</dbReference>
<dbReference type="HOGENOM" id="CLU_1948182_0_0_1"/>
<dbReference type="InParanoid" id="Q805D6"/>
<dbReference type="OrthoDB" id="9387790at2759"/>
<dbReference type="TreeFam" id="TF106305"/>
<dbReference type="Proteomes" id="UP000005226">
    <property type="component" value="Unplaced"/>
</dbReference>
<dbReference type="GO" id="GO:0005576">
    <property type="term" value="C:extracellular region"/>
    <property type="evidence" value="ECO:0007669"/>
    <property type="project" value="UniProtKB-SubCell"/>
</dbReference>
<dbReference type="GO" id="GO:0005179">
    <property type="term" value="F:hormone activity"/>
    <property type="evidence" value="ECO:0007669"/>
    <property type="project" value="UniProtKB-KW"/>
</dbReference>
<dbReference type="GO" id="GO:0097746">
    <property type="term" value="P:blood vessel diameter maintenance"/>
    <property type="evidence" value="ECO:0007669"/>
    <property type="project" value="UniProtKB-KW"/>
</dbReference>
<dbReference type="GO" id="GO:0006182">
    <property type="term" value="P:cGMP biosynthetic process"/>
    <property type="evidence" value="ECO:0007669"/>
    <property type="project" value="TreeGrafter"/>
</dbReference>
<dbReference type="GO" id="GO:0007168">
    <property type="term" value="P:receptor guanylyl cyclase signaling pathway"/>
    <property type="evidence" value="ECO:0007669"/>
    <property type="project" value="TreeGrafter"/>
</dbReference>
<dbReference type="InterPro" id="IPR002406">
    <property type="entry name" value="C_natriurtcpep"/>
</dbReference>
<dbReference type="InterPro" id="IPR000663">
    <property type="entry name" value="Natr_peptide"/>
</dbReference>
<dbReference type="InterPro" id="IPR030480">
    <property type="entry name" value="Natr_peptide_CS"/>
</dbReference>
<dbReference type="PANTHER" id="PTHR12167">
    <property type="entry name" value="C-TYPE NATRIURETIC PEPTIDE"/>
    <property type="match status" value="1"/>
</dbReference>
<dbReference type="PANTHER" id="PTHR12167:SF4">
    <property type="entry name" value="NATRIURETIC PEPTIDE C-LIKE PROTEIN"/>
    <property type="match status" value="1"/>
</dbReference>
<dbReference type="Pfam" id="PF00212">
    <property type="entry name" value="ANP"/>
    <property type="match status" value="1"/>
</dbReference>
<dbReference type="PRINTS" id="PR00713">
    <property type="entry name" value="CNATPEPTIDE"/>
</dbReference>
<dbReference type="PRINTS" id="PR00710">
    <property type="entry name" value="NATPEPTIDES"/>
</dbReference>
<dbReference type="SMART" id="SM00183">
    <property type="entry name" value="NAT_PEP"/>
    <property type="match status" value="1"/>
</dbReference>
<dbReference type="PROSITE" id="PS00263">
    <property type="entry name" value="NATRIURETIC_PEPTIDE"/>
    <property type="match status" value="1"/>
</dbReference>
<comment type="function">
    <text evidence="2 5">Exhibits natriuretic and vasodepressant activity. Has cGMP-stimulating activity. May help to regulate body fluid homeostasis in a variety of aquatic environments.</text>
</comment>
<comment type="subcellular location">
    <subcellularLocation>
        <location>Secreted</location>
    </subcellularLocation>
</comment>
<comment type="similarity">
    <text evidence="4">Belongs to the natriuretic peptide family.</text>
</comment>
<keyword id="KW-0165">Cleavage on pair of basic residues</keyword>
<keyword id="KW-1015">Disulfide bond</keyword>
<keyword id="KW-0372">Hormone</keyword>
<keyword id="KW-1185">Reference proteome</keyword>
<keyword id="KW-0964">Secreted</keyword>
<keyword id="KW-0732">Signal</keyword>
<keyword id="KW-0838">Vasoactive</keyword>
<name>ANFC1_TAKRU</name>
<gene>
    <name evidence="6" type="primary">cnp-1</name>
</gene>
<feature type="signal peptide" evidence="3">
    <location>
        <begin position="1"/>
        <end position="22"/>
    </location>
</feature>
<feature type="propeptide" id="PRO_0000001581" evidence="1">
    <location>
        <begin position="23"/>
        <end position="104"/>
    </location>
</feature>
<feature type="peptide" id="PRO_0000001582" description="C-type natriuretic peptide 1">
    <location>
        <begin position="105"/>
        <end position="126"/>
    </location>
</feature>
<feature type="disulfide bond" evidence="2">
    <location>
        <begin position="110"/>
        <end position="126"/>
    </location>
</feature>
<evidence type="ECO:0000250" key="1"/>
<evidence type="ECO:0000250" key="2">
    <source>
        <dbReference type="UniProtKB" id="P18145"/>
    </source>
</evidence>
<evidence type="ECO:0000255" key="3"/>
<evidence type="ECO:0000255" key="4">
    <source>
        <dbReference type="RuleBase" id="RU003686"/>
    </source>
</evidence>
<evidence type="ECO:0000303" key="5">
    <source>
    </source>
</evidence>
<evidence type="ECO:0000312" key="6">
    <source>
        <dbReference type="EMBL" id="BAC57071.1"/>
    </source>
</evidence>